<reference key="1">
    <citation type="journal article" date="1998" name="Mol. Gen. Genet.">
        <title>Characterization of the gene cluster for biosynthesis of macrocyclic trichothecenes in Myrothecium roridum.</title>
        <authorList>
            <person name="Trapp S.C."/>
            <person name="Hohn T.M."/>
            <person name="McCormick S."/>
            <person name="Jarvis B.B."/>
        </authorList>
    </citation>
    <scope>NUCLEOTIDE SEQUENCE [GENOMIC DNA]</scope>
    <source>
        <strain>ATCC 52485 / TX 1</strain>
    </source>
</reference>
<accession>O13489</accession>
<name>TRI5_PARRD</name>
<keyword id="KW-0456">Lyase</keyword>
<gene>
    <name type="primary">TRI5</name>
</gene>
<dbReference type="EC" id="4.2.3.6"/>
<dbReference type="EMBL" id="AF009416">
    <property type="protein sequence ID" value="AAC49957.1"/>
    <property type="molecule type" value="Genomic_DNA"/>
</dbReference>
<dbReference type="SMR" id="O13489"/>
<dbReference type="UniPathway" id="UPA00267"/>
<dbReference type="GO" id="GO:0045482">
    <property type="term" value="F:trichodiene synthase activity"/>
    <property type="evidence" value="ECO:0007669"/>
    <property type="project" value="UniProtKB-EC"/>
</dbReference>
<dbReference type="GO" id="GO:0016106">
    <property type="term" value="P:sesquiterpenoid biosynthetic process"/>
    <property type="evidence" value="ECO:0007669"/>
    <property type="project" value="InterPro"/>
</dbReference>
<dbReference type="CDD" id="cd00686">
    <property type="entry name" value="Terpene_cyclase_cis_trans_C1"/>
    <property type="match status" value="1"/>
</dbReference>
<dbReference type="Gene3D" id="1.10.600.10">
    <property type="entry name" value="Farnesyl Diphosphate Synthase"/>
    <property type="match status" value="1"/>
</dbReference>
<dbReference type="InterPro" id="IPR008949">
    <property type="entry name" value="Isoprenoid_synthase_dom_sf"/>
</dbReference>
<dbReference type="InterPro" id="IPR010458">
    <property type="entry name" value="TRI5_ascomyc"/>
</dbReference>
<dbReference type="InterPro" id="IPR024652">
    <property type="entry name" value="Trichodiene_synth"/>
</dbReference>
<dbReference type="Pfam" id="PF06330">
    <property type="entry name" value="TRI5"/>
    <property type="match status" value="1"/>
</dbReference>
<dbReference type="PIRSF" id="PIRSF001388">
    <property type="entry name" value="TRI5"/>
    <property type="match status" value="1"/>
</dbReference>
<dbReference type="SFLD" id="SFLDS00005">
    <property type="entry name" value="Isoprenoid_Synthase_Type_I"/>
    <property type="match status" value="1"/>
</dbReference>
<dbReference type="SFLD" id="SFLDG01021">
    <property type="entry name" value="Trichodiene_Synthase_Like"/>
    <property type="match status" value="1"/>
</dbReference>
<dbReference type="SUPFAM" id="SSF48576">
    <property type="entry name" value="Terpenoid synthases"/>
    <property type="match status" value="1"/>
</dbReference>
<comment type="function">
    <text>TS is a member of the terpene cyclase group of enzymes. It catalyzes the isomerization and cyclization of farnesyl pyro-phosphate to form trichodiene, the first cyclic intermediate in the biosynthetic pathway for trichothecenes. It serves to branch trichothecene biosynthesis from the isoprenoid pathway.</text>
</comment>
<comment type="catalytic activity">
    <reaction>
        <text>(2E,6E)-farnesyl diphosphate = trichodiene + diphosphate</text>
        <dbReference type="Rhea" id="RHEA:12052"/>
        <dbReference type="ChEBI" id="CHEBI:15861"/>
        <dbReference type="ChEBI" id="CHEBI:33019"/>
        <dbReference type="ChEBI" id="CHEBI:175763"/>
        <dbReference type="EC" id="4.2.3.6"/>
    </reaction>
</comment>
<comment type="pathway">
    <text>Sesquiterpene biosynthesis; trichothecene biosynthesis.</text>
</comment>
<comment type="miscellaneous">
    <text>Trichothecenes are sesquiterpenoid toxins that act by inhibiting protein biosynthesis.</text>
</comment>
<comment type="similarity">
    <text evidence="1">Belongs to the trichodiene synthase family.</text>
</comment>
<protein>
    <recommendedName>
        <fullName>Trichodiene synthase</fullName>
        <ecNumber>4.2.3.6</ecNumber>
    </recommendedName>
    <alternativeName>
        <fullName>Sesquiterpene cyclase</fullName>
        <shortName>TS</shortName>
    </alternativeName>
</protein>
<proteinExistence type="inferred from homology"/>
<sequence length="385" mass="44869">MDEFPTEYFLGTAVRLLENVKYRDSNYTREERIENLSYANNKAAAHFAQERQQRILKVNPKRLEASLRTIVGMVVYSWVKVSKELMADLSIHYTYTLILDDSEDDPHNNMLTFFDDLQAGREQKHPWWMLVNEHFPNVLRHFGPFCSLNLIRSTLDFFEGCWIEQYNFHGFPGSYDFPGFLRRMNGLGHCVGGSLWPKELFDEQKHFLEITSAVAQMENWMVWVNDLMSFYKEFDDPRDQTSLVKNYVVCDEISLTQALEKLTVDTLTSSEQMMEVFSDKDAKLMETIECFMHGYITWHLCDHRYRLKEVYEGTMHIETEDAIKFRKFYGQAAKVGAIEHEEWAFPTVAERIEVRLAEEKAAKDGQAVLTSAEPAVPQAAQEVLA</sequence>
<organism>
    <name type="scientific">Paramyrothecium roridum</name>
    <name type="common">Myrothecium leaf spot fungus</name>
    <name type="synonym">Myrothecium roridum</name>
    <dbReference type="NCBI Taxonomy" id="1859971"/>
    <lineage>
        <taxon>Eukaryota</taxon>
        <taxon>Fungi</taxon>
        <taxon>Dikarya</taxon>
        <taxon>Ascomycota</taxon>
        <taxon>Pezizomycotina</taxon>
        <taxon>Sordariomycetes</taxon>
        <taxon>Hypocreomycetidae</taxon>
        <taxon>Hypocreales</taxon>
        <taxon>Stachybotryaceae</taxon>
        <taxon>Paramyrothecium</taxon>
    </lineage>
</organism>
<feature type="chain" id="PRO_0000221587" description="Trichodiene synthase">
    <location>
        <begin position="1"/>
        <end position="385"/>
    </location>
</feature>
<evidence type="ECO:0000305" key="1"/>